<evidence type="ECO:0000255" key="1">
    <source>
        <dbReference type="HAMAP-Rule" id="MF_02076"/>
    </source>
</evidence>
<evidence type="ECO:0000256" key="2">
    <source>
        <dbReference type="SAM" id="MobiDB-lite"/>
    </source>
</evidence>
<sequence length="586" mass="65312">MDDELRERVRRAAERAALFNALKHGSDAQVGAIMGPMMGEHPDFRAHGDEIPGVIAPVIEDVNGMSDDEQRARLAELAPEDVEELDSEDEGDDHALPALPNAEAYDEVRMRCAPNPNGPWHVGHARMPSVIGTYKQRYDGSFVVRFDDTDPETKRPDLDAYDQILEDLSYLGFEADEVLTASDRVETYYEHARRLIGMGGAYTCSCPGAEFSDLKNSGEACPHRDKDPETVADEFEAMVDGEYNSGEMVLRVKTDITHKNPALRDWVAFRMVDTPHPRDAASGYRCWPMLDFQSGVDDHRTGVTHIIRGIDLQDSAKRQRFLYEYFGWEYPEVVHWGHVQLDAYDVAMSTSTIKERIAAGELEGWDDPRAPTMQSIRRRGIRGAAVVDAMVELGTSSSDVELAMSAVYANNRDLVDDTAPRQFLVRDGFEARGEGPEESHEAVEVPVDDGPDEATPQVHPEHPDRGDREIPVGERVLVEATDLPAAGDRVWLKGYGPVRYDGERFAFLDADIDIVREEGVDVVQWVPAEHNVDVRLRTMDGDVTGYAEPGFADRDADEIVQFVRVGFARVDAHRDGGASVAYFTHP</sequence>
<gene>
    <name evidence="1" type="primary">gltX</name>
    <name type="ordered locus">OE_2652F</name>
</gene>
<comment type="function">
    <text evidence="1">Catalyzes the attachment of glutamate to tRNA(Glu) in a two-step reaction: glutamate is first activated by ATP to form Glu-AMP and then transferred to the acceptor end of tRNA(Glu).</text>
</comment>
<comment type="catalytic activity">
    <reaction evidence="1">
        <text>tRNA(Glu) + L-glutamate + ATP = L-glutamyl-tRNA(Glu) + AMP + diphosphate</text>
        <dbReference type="Rhea" id="RHEA:23540"/>
        <dbReference type="Rhea" id="RHEA-COMP:9663"/>
        <dbReference type="Rhea" id="RHEA-COMP:9680"/>
        <dbReference type="ChEBI" id="CHEBI:29985"/>
        <dbReference type="ChEBI" id="CHEBI:30616"/>
        <dbReference type="ChEBI" id="CHEBI:33019"/>
        <dbReference type="ChEBI" id="CHEBI:78442"/>
        <dbReference type="ChEBI" id="CHEBI:78520"/>
        <dbReference type="ChEBI" id="CHEBI:456215"/>
        <dbReference type="EC" id="6.1.1.17"/>
    </reaction>
</comment>
<comment type="subcellular location">
    <subcellularLocation>
        <location evidence="1">Cytoplasm</location>
    </subcellularLocation>
</comment>
<comment type="similarity">
    <text evidence="1">Belongs to the class-I aminoacyl-tRNA synthetase family. Glutamate--tRNA ligase type 2 subfamily.</text>
</comment>
<reference key="1">
    <citation type="journal article" date="2008" name="Genomics">
        <title>Evolution in the laboratory: the genome of Halobacterium salinarum strain R1 compared to that of strain NRC-1.</title>
        <authorList>
            <person name="Pfeiffer F."/>
            <person name="Schuster S.C."/>
            <person name="Broicher A."/>
            <person name="Falb M."/>
            <person name="Palm P."/>
            <person name="Rodewald K."/>
            <person name="Ruepp A."/>
            <person name="Soppa J."/>
            <person name="Tittor J."/>
            <person name="Oesterhelt D."/>
        </authorList>
    </citation>
    <scope>NUCLEOTIDE SEQUENCE [LARGE SCALE GENOMIC DNA]</scope>
    <source>
        <strain>ATCC 29341 / DSM 671 / R1</strain>
    </source>
</reference>
<accession>B0R4Z6</accession>
<keyword id="KW-0030">Aminoacyl-tRNA synthetase</keyword>
<keyword id="KW-0067">ATP-binding</keyword>
<keyword id="KW-0963">Cytoplasm</keyword>
<keyword id="KW-0436">Ligase</keyword>
<keyword id="KW-0547">Nucleotide-binding</keyword>
<keyword id="KW-0648">Protein biosynthesis</keyword>
<dbReference type="EC" id="6.1.1.17" evidence="1"/>
<dbReference type="EMBL" id="AM774415">
    <property type="protein sequence ID" value="CAP13811.1"/>
    <property type="molecule type" value="Genomic_DNA"/>
</dbReference>
<dbReference type="RefSeq" id="WP_010902829.1">
    <property type="nucleotide sequence ID" value="NC_010364.1"/>
</dbReference>
<dbReference type="SMR" id="B0R4Z6"/>
<dbReference type="EnsemblBacteria" id="CAP13811">
    <property type="protein sequence ID" value="CAP13811"/>
    <property type="gene ID" value="OE_2652F"/>
</dbReference>
<dbReference type="KEGG" id="hsl:OE_2652F"/>
<dbReference type="HOGENOM" id="CLU_001882_1_3_2"/>
<dbReference type="PhylomeDB" id="B0R4Z6"/>
<dbReference type="Proteomes" id="UP000001321">
    <property type="component" value="Chromosome"/>
</dbReference>
<dbReference type="GO" id="GO:0005829">
    <property type="term" value="C:cytosol"/>
    <property type="evidence" value="ECO:0007669"/>
    <property type="project" value="TreeGrafter"/>
</dbReference>
<dbReference type="GO" id="GO:0005524">
    <property type="term" value="F:ATP binding"/>
    <property type="evidence" value="ECO:0007669"/>
    <property type="project" value="UniProtKB-UniRule"/>
</dbReference>
<dbReference type="GO" id="GO:0004818">
    <property type="term" value="F:glutamate-tRNA ligase activity"/>
    <property type="evidence" value="ECO:0007669"/>
    <property type="project" value="UniProtKB-UniRule"/>
</dbReference>
<dbReference type="GO" id="GO:0043604">
    <property type="term" value="P:amide biosynthetic process"/>
    <property type="evidence" value="ECO:0007669"/>
    <property type="project" value="TreeGrafter"/>
</dbReference>
<dbReference type="GO" id="GO:0006424">
    <property type="term" value="P:glutamyl-tRNA aminoacylation"/>
    <property type="evidence" value="ECO:0007669"/>
    <property type="project" value="UniProtKB-UniRule"/>
</dbReference>
<dbReference type="CDD" id="cd09287">
    <property type="entry name" value="GluRS_non_core"/>
    <property type="match status" value="1"/>
</dbReference>
<dbReference type="FunFam" id="2.40.240.100:FF:000001">
    <property type="entry name" value="Glutamate--tRNA ligase"/>
    <property type="match status" value="1"/>
</dbReference>
<dbReference type="Gene3D" id="2.40.240.100">
    <property type="match status" value="1"/>
</dbReference>
<dbReference type="Gene3D" id="3.40.50.620">
    <property type="entry name" value="HUPs"/>
    <property type="match status" value="1"/>
</dbReference>
<dbReference type="Gene3D" id="2.40.240.10">
    <property type="entry name" value="Ribosomal Protein L25, Chain P"/>
    <property type="match status" value="1"/>
</dbReference>
<dbReference type="HAMAP" id="MF_02076">
    <property type="entry name" value="Glu_tRNA_synth_type2"/>
    <property type="match status" value="1"/>
</dbReference>
<dbReference type="InterPro" id="IPR050132">
    <property type="entry name" value="Gln/Glu-tRNA_Ligase"/>
</dbReference>
<dbReference type="InterPro" id="IPR004526">
    <property type="entry name" value="Glu-tRNA-synth_arc/euk"/>
</dbReference>
<dbReference type="InterPro" id="IPR000924">
    <property type="entry name" value="Glu/Gln-tRNA-synth"/>
</dbReference>
<dbReference type="InterPro" id="IPR020058">
    <property type="entry name" value="Glu/Gln-tRNA-synth_Ib_cat-dom"/>
</dbReference>
<dbReference type="InterPro" id="IPR020059">
    <property type="entry name" value="Glu/Gln-tRNA-synth_Ib_codon-bd"/>
</dbReference>
<dbReference type="InterPro" id="IPR020056">
    <property type="entry name" value="Rbsml_bL25/Gln-tRNA_synth_N"/>
</dbReference>
<dbReference type="InterPro" id="IPR011035">
    <property type="entry name" value="Ribosomal_bL25/Gln-tRNA_synth"/>
</dbReference>
<dbReference type="InterPro" id="IPR014729">
    <property type="entry name" value="Rossmann-like_a/b/a_fold"/>
</dbReference>
<dbReference type="InterPro" id="IPR049437">
    <property type="entry name" value="tRNA-synt_1c_C2"/>
</dbReference>
<dbReference type="NCBIfam" id="TIGR00463">
    <property type="entry name" value="gltX_arch"/>
    <property type="match status" value="1"/>
</dbReference>
<dbReference type="NCBIfam" id="NF003169">
    <property type="entry name" value="PRK04156.1"/>
    <property type="match status" value="1"/>
</dbReference>
<dbReference type="PANTHER" id="PTHR43097:SF5">
    <property type="entry name" value="GLUTAMATE--TRNA LIGASE"/>
    <property type="match status" value="1"/>
</dbReference>
<dbReference type="PANTHER" id="PTHR43097">
    <property type="entry name" value="GLUTAMINE-TRNA LIGASE"/>
    <property type="match status" value="1"/>
</dbReference>
<dbReference type="Pfam" id="PF00749">
    <property type="entry name" value="tRNA-synt_1c"/>
    <property type="match status" value="1"/>
</dbReference>
<dbReference type="Pfam" id="PF03950">
    <property type="entry name" value="tRNA-synt_1c_C"/>
    <property type="match status" value="1"/>
</dbReference>
<dbReference type="Pfam" id="PF20974">
    <property type="entry name" value="tRNA-synt_1c_C2"/>
    <property type="match status" value="1"/>
</dbReference>
<dbReference type="PRINTS" id="PR00987">
    <property type="entry name" value="TRNASYNTHGLU"/>
</dbReference>
<dbReference type="SUPFAM" id="SSF52374">
    <property type="entry name" value="Nucleotidylyl transferase"/>
    <property type="match status" value="1"/>
</dbReference>
<dbReference type="SUPFAM" id="SSF50715">
    <property type="entry name" value="Ribosomal protein L25-like"/>
    <property type="match status" value="1"/>
</dbReference>
<name>SYE_HALS3</name>
<proteinExistence type="inferred from homology"/>
<feature type="chain" id="PRO_1000090079" description="Glutamate--tRNA ligase">
    <location>
        <begin position="1"/>
        <end position="586"/>
    </location>
</feature>
<feature type="region of interest" description="Disordered" evidence="2">
    <location>
        <begin position="431"/>
        <end position="468"/>
    </location>
</feature>
<feature type="short sequence motif" description="'HIGH' region" evidence="1">
    <location>
        <begin position="114"/>
        <end position="124"/>
    </location>
</feature>
<feature type="compositionally biased region" description="Basic and acidic residues" evidence="2">
    <location>
        <begin position="431"/>
        <end position="443"/>
    </location>
</feature>
<feature type="compositionally biased region" description="Basic and acidic residues" evidence="2">
    <location>
        <begin position="459"/>
        <end position="468"/>
    </location>
</feature>
<organism>
    <name type="scientific">Halobacterium salinarum (strain ATCC 29341 / DSM 671 / R1)</name>
    <dbReference type="NCBI Taxonomy" id="478009"/>
    <lineage>
        <taxon>Archaea</taxon>
        <taxon>Methanobacteriati</taxon>
        <taxon>Methanobacteriota</taxon>
        <taxon>Stenosarchaea group</taxon>
        <taxon>Halobacteria</taxon>
        <taxon>Halobacteriales</taxon>
        <taxon>Halobacteriaceae</taxon>
        <taxon>Halobacterium</taxon>
        <taxon>Halobacterium salinarum NRC-34001</taxon>
    </lineage>
</organism>
<protein>
    <recommendedName>
        <fullName evidence="1">Glutamate--tRNA ligase</fullName>
        <ecNumber evidence="1">6.1.1.17</ecNumber>
    </recommendedName>
    <alternativeName>
        <fullName evidence="1">Glutamyl-tRNA synthetase</fullName>
        <shortName evidence="1">GluRS</shortName>
    </alternativeName>
</protein>